<name>HIP_ALLVD</name>
<protein>
    <recommendedName>
        <fullName>High-potential iron-sulfur protein</fullName>
        <shortName>HiPIP</shortName>
    </recommendedName>
</protein>
<reference key="1">
    <citation type="journal article" date="1997" name="Biochim. Biophys. Acta">
        <title>Cloning and sequencing of the gene encoding the high potential iron-sulfur protein (HiPIP) from the purple sulfur bacterium Chromatium vinosum.</title>
        <authorList>
            <person name="Bruser T."/>
            <person name="Truper H.G."/>
            <person name="Dahl C."/>
        </authorList>
    </citation>
    <scope>NUCLEOTIDE SEQUENCE [GENOMIC DNA]</scope>
</reference>
<reference key="2">
    <citation type="journal article" date="2011" name="Stand. Genomic Sci.">
        <title>Complete genome sequence of Allochromatium vinosum DSM 180(T).</title>
        <authorList>
            <person name="Weissgerber T."/>
            <person name="Zigann R."/>
            <person name="Bruce D."/>
            <person name="Chang Y.J."/>
            <person name="Detter J.C."/>
            <person name="Han C."/>
            <person name="Hauser L."/>
            <person name="Jeffries C.D."/>
            <person name="Land M."/>
            <person name="Munk A.C."/>
            <person name="Tapia R."/>
            <person name="Dahl C."/>
        </authorList>
    </citation>
    <scope>NUCLEOTIDE SEQUENCE [LARGE SCALE GENOMIC DNA]</scope>
    <source>
        <strain>ATCC 17899 / DSM 180 / NBRC 103801 / NCIMB 10441 / D</strain>
    </source>
</reference>
<reference key="3">
    <citation type="journal article" date="1973" name="J. Biol. Chem.">
        <title>The complete amino acid sequence of Chromatium high potential iron sulfur protein.</title>
        <authorList>
            <person name="Dus K."/>
            <person name="Tedro S."/>
            <person name="Bartsch R.G."/>
        </authorList>
    </citation>
    <scope>PROTEIN SEQUENCE OF 38-122</scope>
</reference>
<reference key="4">
    <citation type="journal article" date="1981" name="J. Biol. Chem.">
        <title>Primary structures of high potential, four-iron-sulfur ferredoxins from the purple sulfur photosynthetic bacteria, Thiocapsa roseopersicina and Chromatium gracile.</title>
        <authorList>
            <person name="Tedro S.M."/>
            <person name="Meyer T.E."/>
            <person name="Bartsch R.G."/>
            <person name="Kamen M.D."/>
        </authorList>
    </citation>
    <scope>SEQUENCE REVISION TO 48; 82 AND 111</scope>
</reference>
<reference key="5">
    <citation type="journal article" date="1974" name="J. Biol. Chem.">
        <title>2-A crystal structure of oxidized Chromatium high potential iron protein.</title>
        <authorList>
            <person name="Carter C.W. Jr."/>
            <person name="Kraut J."/>
            <person name="Freer S.T."/>
            <person name="Xuong N.H."/>
            <person name="Alden R.A."/>
            <person name="Bartsch R.G."/>
        </authorList>
    </citation>
    <scope>X-RAY CRYSTALLOGRAPHY (2.0 ANGSTROMS) IN COMPLEX WITH IRON-SULFUR (4FE-4S)</scope>
</reference>
<reference key="6">
    <citation type="journal article" date="1992" name="Biochemistry">
        <title>Sequential resonance assignments of oxidized high-potential iron-sulfur protein from Chromatium vinosum.</title>
        <authorList>
            <person name="Nettesheim D.G."/>
            <person name="Harder S.R."/>
            <person name="Feinberg B.A."/>
            <person name="Otvos J.D."/>
        </authorList>
    </citation>
    <scope>STRUCTURE BY NMR</scope>
</reference>
<reference key="7">
    <citation type="journal article" date="1992" name="Biochemistry">
        <title>Sequence-specific assignments of the 1H nuclear magnetic resonance spectra of reduced high-potential ferredoxin (HiPIP) from Chromatium vinosum.</title>
        <authorList>
            <person name="Gaillard J."/>
            <person name="Albrand J.-P."/>
            <person name="Moulis J.-M."/>
            <person name="Wemmer D.E."/>
        </authorList>
    </citation>
    <scope>STRUCTURE BY NMR</scope>
</reference>
<reference key="8">
    <citation type="journal article" date="1995" name="Biochemistry">
        <title>The three-dimensional solution structure of the reduced high-potential iron-sulfur protein from Chromatium vinosum through NMR.</title>
        <authorList>
            <person name="Banci L."/>
            <person name="Bertini I."/>
            <person name="Dikiy A."/>
            <person name="Kastrau D.H.W."/>
            <person name="Luchinat C."/>
            <person name="Sompornpisut P."/>
        </authorList>
    </citation>
    <scope>STRUCTURE BY NMR</scope>
</reference>
<reference key="9">
    <citation type="journal article" date="1995" name="Biochemistry">
        <title>Three-dimensional solution structure of the oxidized high potential iron-sulfur protein from Chromatium vinosum through NMR. Comparative analysis with the solution structure of the reduced species.</title>
        <authorList>
            <person name="Bertini I."/>
            <person name="Dikiy A."/>
            <person name="Kastrau D.H."/>
            <person name="Luchinat C."/>
            <person name="Sompornpisut P."/>
        </authorList>
    </citation>
    <scope>STRUCTURE BY NMR</scope>
</reference>
<reference key="10">
    <citation type="journal article" date="1996" name="Biochemistry">
        <title>Three-dimensional structure of the reduced C77S mutant of the Chromatium vinosum high-potential iron-sulfur protein through nuclear magnetic resonance: comparison with the solution structure of the wild-type protein.</title>
        <authorList>
            <person name="Bentrop D."/>
            <person name="Bertini I."/>
            <person name="Cappozi F."/>
            <person name="Dikiy A."/>
            <person name="Eltis L."/>
            <person name="Luchinat C."/>
        </authorList>
    </citation>
    <scope>STRUCTURE BY NMR OF MUTANT SER-114</scope>
</reference>
<reference key="11">
    <citation type="journal article" date="1999" name="Acta Crystallogr. D">
        <title>Ab initio solution and refinement of two high-potential iron protein structures at atomic resolution.</title>
        <authorList>
            <person name="Parisini E."/>
            <person name="Capozzi F."/>
            <person name="Lubini P."/>
            <person name="Lamzin V."/>
            <person name="Luchinat C."/>
            <person name="Sheldrick G.M."/>
        </authorList>
    </citation>
    <scope>X-RAY CRYSTALLOGRAPHY (0.93 ANGSTROMS)</scope>
</reference>
<gene>
    <name type="primary">hip</name>
    <name type="ordered locus">Alvin_2274</name>
</gene>
<feature type="signal peptide" evidence="2">
    <location>
        <begin position="1"/>
        <end position="37"/>
    </location>
</feature>
<feature type="chain" id="PRO_0000013438" description="High-potential iron-sulfur protein">
    <location>
        <begin position="38"/>
        <end position="122"/>
    </location>
</feature>
<feature type="binding site" evidence="3">
    <location>
        <position position="80"/>
    </location>
    <ligand>
        <name>[4Fe-4S] cluster</name>
        <dbReference type="ChEBI" id="CHEBI:49883"/>
    </ligand>
</feature>
<feature type="binding site" evidence="3">
    <location>
        <position position="83"/>
    </location>
    <ligand>
        <name>[4Fe-4S] cluster</name>
        <dbReference type="ChEBI" id="CHEBI:49883"/>
    </ligand>
</feature>
<feature type="binding site" evidence="3">
    <location>
        <position position="100"/>
    </location>
    <ligand>
        <name>[4Fe-4S] cluster</name>
        <dbReference type="ChEBI" id="CHEBI:49883"/>
    </ligand>
</feature>
<feature type="binding site" evidence="3">
    <location>
        <position position="114"/>
    </location>
    <ligand>
        <name>[4Fe-4S] cluster</name>
        <dbReference type="ChEBI" id="CHEBI:49883"/>
    </ligand>
</feature>
<feature type="sequence conflict" description="In Ref. 4." evidence="4" ref="4">
    <original>N</original>
    <variation>D</variation>
    <location>
        <position position="111"/>
    </location>
</feature>
<feature type="helix" evidence="5">
    <location>
        <begin position="49"/>
        <end position="54"/>
    </location>
</feature>
<feature type="strand" evidence="5">
    <location>
        <begin position="57"/>
        <end position="59"/>
    </location>
</feature>
<feature type="helix" evidence="5">
    <location>
        <begin position="60"/>
        <end position="62"/>
    </location>
</feature>
<feature type="helix" evidence="5">
    <location>
        <begin position="65"/>
        <end position="68"/>
    </location>
</feature>
<feature type="strand" evidence="6">
    <location>
        <begin position="71"/>
        <end position="73"/>
    </location>
</feature>
<feature type="helix" evidence="5">
    <location>
        <begin position="75"/>
        <end position="77"/>
    </location>
</feature>
<feature type="helix" evidence="5">
    <location>
        <begin position="80"/>
        <end position="82"/>
    </location>
</feature>
<feature type="strand" evidence="6">
    <location>
        <begin position="86"/>
        <end position="90"/>
    </location>
</feature>
<feature type="strand" evidence="5">
    <location>
        <begin position="95"/>
        <end position="100"/>
    </location>
</feature>
<feature type="strand" evidence="5">
    <location>
        <begin position="107"/>
        <end position="109"/>
    </location>
</feature>
<comment type="function">
    <text>Specific class of high-redox-potential 4Fe-4S ferredoxins. Functions in anaerobic electron transport in most purple and in some other photosynthetic bacteria and in at least one genus (Paracoccus) of halophilic, denitrifying bacteria.</text>
</comment>
<comment type="biophysicochemical properties">
    <redoxPotential>
        <text>E(0) is +360 mV.</text>
    </redoxPotential>
</comment>
<comment type="subunit">
    <text evidence="4">Homodimer.</text>
</comment>
<comment type="subcellular location">
    <subcellularLocation>
        <location>Periplasm</location>
    </subcellularLocation>
</comment>
<comment type="similarity">
    <text evidence="1">Belongs to the high-potential iron-sulfur protein (HiPIP) family.</text>
</comment>
<dbReference type="EMBL" id="U81381">
    <property type="protein sequence ID" value="AAB48829.1"/>
    <property type="molecule type" value="Genomic_DNA"/>
</dbReference>
<dbReference type="EMBL" id="CP001896">
    <property type="protein sequence ID" value="ADC63191.1"/>
    <property type="molecule type" value="Genomic_DNA"/>
</dbReference>
<dbReference type="RefSeq" id="WP_012971463.1">
    <property type="nucleotide sequence ID" value="NC_013851.1"/>
</dbReference>
<dbReference type="PDB" id="1B0Y">
    <property type="method" value="X-ray"/>
    <property type="resolution" value="0.93 A"/>
    <property type="chains" value="A=38-122"/>
</dbReference>
<dbReference type="PDB" id="1CKU">
    <property type="method" value="X-ray"/>
    <property type="resolution" value="1.20 A"/>
    <property type="chains" value="A/B=38-122"/>
</dbReference>
<dbReference type="PDB" id="1HIP">
    <property type="method" value="X-ray"/>
    <property type="resolution" value="2.00 A"/>
    <property type="chains" value="A=38-122"/>
</dbReference>
<dbReference type="PDB" id="1HRQ">
    <property type="method" value="NMR"/>
    <property type="chains" value="A=38-122"/>
</dbReference>
<dbReference type="PDB" id="1HRR">
    <property type="method" value="NMR"/>
    <property type="chains" value="A=38-122"/>
</dbReference>
<dbReference type="PDB" id="1JS2">
    <property type="method" value="X-ray"/>
    <property type="resolution" value="1.90 A"/>
    <property type="chains" value="A/B/C/D=38-122"/>
</dbReference>
<dbReference type="PDB" id="1NEH">
    <property type="method" value="NMR"/>
    <property type="chains" value="A=38-122"/>
</dbReference>
<dbReference type="PDB" id="1NOE">
    <property type="method" value="NMR"/>
    <property type="chains" value="A=37-122"/>
</dbReference>
<dbReference type="PDBsum" id="1B0Y"/>
<dbReference type="PDBsum" id="1CKU"/>
<dbReference type="PDBsum" id="1HIP"/>
<dbReference type="PDBsum" id="1HRQ"/>
<dbReference type="PDBsum" id="1HRR"/>
<dbReference type="PDBsum" id="1JS2"/>
<dbReference type="PDBsum" id="1NEH"/>
<dbReference type="PDBsum" id="1NOE"/>
<dbReference type="BMRB" id="P00260"/>
<dbReference type="SMR" id="P00260"/>
<dbReference type="STRING" id="572477.Alvin_2274"/>
<dbReference type="KEGG" id="alv:Alvin_2274"/>
<dbReference type="eggNOG" id="ENOG50330XW">
    <property type="taxonomic scope" value="Bacteria"/>
</dbReference>
<dbReference type="HOGENOM" id="CLU_147871_0_0_6"/>
<dbReference type="OrthoDB" id="5298540at2"/>
<dbReference type="EvolutionaryTrace" id="P00260"/>
<dbReference type="Proteomes" id="UP000001441">
    <property type="component" value="Chromosome"/>
</dbReference>
<dbReference type="GO" id="GO:0042597">
    <property type="term" value="C:periplasmic space"/>
    <property type="evidence" value="ECO:0007669"/>
    <property type="project" value="UniProtKB-SubCell"/>
</dbReference>
<dbReference type="GO" id="GO:0051539">
    <property type="term" value="F:4 iron, 4 sulfur cluster binding"/>
    <property type="evidence" value="ECO:0007669"/>
    <property type="project" value="UniProtKB-KW"/>
</dbReference>
<dbReference type="GO" id="GO:0009055">
    <property type="term" value="F:electron transfer activity"/>
    <property type="evidence" value="ECO:0007669"/>
    <property type="project" value="InterPro"/>
</dbReference>
<dbReference type="GO" id="GO:0046872">
    <property type="term" value="F:metal ion binding"/>
    <property type="evidence" value="ECO:0007669"/>
    <property type="project" value="UniProtKB-KW"/>
</dbReference>
<dbReference type="GO" id="GO:0019646">
    <property type="term" value="P:aerobic electron transport chain"/>
    <property type="evidence" value="ECO:0007669"/>
    <property type="project" value="InterPro"/>
</dbReference>
<dbReference type="Gene3D" id="4.10.490.10">
    <property type="entry name" value="High potential iron-sulphur protein"/>
    <property type="match status" value="1"/>
</dbReference>
<dbReference type="InterPro" id="IPR000170">
    <property type="entry name" value="High_potential_FeS_prot"/>
</dbReference>
<dbReference type="InterPro" id="IPR036369">
    <property type="entry name" value="HIPIP_sf"/>
</dbReference>
<dbReference type="InterPro" id="IPR006311">
    <property type="entry name" value="TAT_signal"/>
</dbReference>
<dbReference type="Pfam" id="PF01355">
    <property type="entry name" value="HIPIP"/>
    <property type="match status" value="1"/>
</dbReference>
<dbReference type="SUPFAM" id="SSF57652">
    <property type="entry name" value="HIPIP (high potential iron protein)"/>
    <property type="match status" value="1"/>
</dbReference>
<dbReference type="PROSITE" id="PS51373">
    <property type="entry name" value="HIPIP"/>
    <property type="match status" value="1"/>
</dbReference>
<dbReference type="PROSITE" id="PS51318">
    <property type="entry name" value="TAT"/>
    <property type="match status" value="1"/>
</dbReference>
<organism>
    <name type="scientific">Allochromatium vinosum (strain ATCC 17899 / DSM 180 / NBRC 103801 / NCIMB 10441 / D)</name>
    <name type="common">Chromatium vinosum</name>
    <dbReference type="NCBI Taxonomy" id="572477"/>
    <lineage>
        <taxon>Bacteria</taxon>
        <taxon>Pseudomonadati</taxon>
        <taxon>Pseudomonadota</taxon>
        <taxon>Gammaproteobacteria</taxon>
        <taxon>Chromatiales</taxon>
        <taxon>Chromatiaceae</taxon>
        <taxon>Allochromatium</taxon>
    </lineage>
</organism>
<sequence length="122" mass="12762">MSDKPISKSRRDAVKVMLGTAAAIPMINLVGFGTARASAPANAVAADDATAIALKYNQDATKSERVAAARPGLPPEEQHCANCQFMQADAAGATDEWKGCQLFPGKLINVNGWCASWTLKAG</sequence>
<accession>P00260</accession>
<accession>D3RMQ3</accession>
<accession>P96753</accession>
<accession>Q9R4K3</accession>
<evidence type="ECO:0000255" key="1">
    <source>
        <dbReference type="PROSITE-ProRule" id="PRU00705"/>
    </source>
</evidence>
<evidence type="ECO:0000269" key="2">
    <source>
    </source>
</evidence>
<evidence type="ECO:0000269" key="3">
    <source>
    </source>
</evidence>
<evidence type="ECO:0000305" key="4"/>
<evidence type="ECO:0007829" key="5">
    <source>
        <dbReference type="PDB" id="1B0Y"/>
    </source>
</evidence>
<evidence type="ECO:0007829" key="6">
    <source>
        <dbReference type="PDB" id="1JS2"/>
    </source>
</evidence>
<proteinExistence type="evidence at protein level"/>
<keyword id="KW-0002">3D-structure</keyword>
<keyword id="KW-0004">4Fe-4S</keyword>
<keyword id="KW-0903">Direct protein sequencing</keyword>
<keyword id="KW-0249">Electron transport</keyword>
<keyword id="KW-0408">Iron</keyword>
<keyword id="KW-0411">Iron-sulfur</keyword>
<keyword id="KW-0479">Metal-binding</keyword>
<keyword id="KW-0574">Periplasm</keyword>
<keyword id="KW-1185">Reference proteome</keyword>
<keyword id="KW-0732">Signal</keyword>
<keyword id="KW-0813">Transport</keyword>